<accession>O88450</accession>
<accession>Q62998</accession>
<proteinExistence type="evidence at protein level"/>
<name>DEAF1_RAT</name>
<protein>
    <recommendedName>
        <fullName>Deformed epidermal autoregulatory factor 1 homolog</fullName>
    </recommendedName>
    <alternativeName>
        <fullName>Nuclear DEAF-1-related transcriptional regulator</fullName>
        <shortName>NUDR</shortName>
    </alternativeName>
    <alternativeName>
        <fullName>Suppressin</fullName>
    </alternativeName>
</protein>
<reference key="1">
    <citation type="journal article" date="1998" name="Mol. Endocrinol.">
        <title>Characterization of a nuclear deformed epidermal autoregulatory factor-1 (DEAF-1)-related (NUDR) transcriptional regulator protein.</title>
        <authorList>
            <person name="Huggenvik J.I."/>
            <person name="Michelson R.J."/>
            <person name="Collard M.W."/>
            <person name="Ziemba A.J."/>
            <person name="Gurley P."/>
            <person name="Mowen K.A."/>
        </authorList>
    </citation>
    <scope>NUCLEOTIDE SEQUENCE [MRNA] (ISOFORM 1)</scope>
    <source>
        <strain>Sprague-Dawley</strain>
        <tissue>Testis</tissue>
    </source>
</reference>
<reference key="2">
    <citation type="journal article" date="1998" name="J. Biol. Chem.">
        <title>Molecular cloning, sequence analysis, expression, and tissue distribution of suppressin, a novel suppressor of cell cycle entry.</title>
        <authorList>
            <person name="LeBoeuf R.D."/>
            <person name="Ban E.M.H."/>
            <person name="Green M.M."/>
            <person name="Stone A.S."/>
            <person name="Propst S.M."/>
            <person name="Blalock J.E."/>
            <person name="Tauber J.D."/>
        </authorList>
    </citation>
    <scope>NUCLEOTIDE SEQUENCE [MRNA] (ISOFORM 2)</scope>
    <source>
        <strain>Sprague-Dawley</strain>
        <tissue>Pituitary</tissue>
    </source>
</reference>
<reference key="3">
    <citation type="journal article" date="2006" name="Proc. Natl. Acad. Sci. U.S.A.">
        <title>Quantitative phosphoproteomics of vasopressin-sensitive renal cells: regulation of aquaporin-2 phosphorylation at two sites.</title>
        <authorList>
            <person name="Hoffert J.D."/>
            <person name="Pisitkun T."/>
            <person name="Wang G."/>
            <person name="Shen R.-F."/>
            <person name="Knepper M.A."/>
        </authorList>
    </citation>
    <scope>PHOSPHORYLATION [LARGE SCALE ANALYSIS] AT SER-443 AND SER-448</scope>
    <scope>IDENTIFICATION BY MASS SPECTROMETRY [LARGE SCALE ANALYSIS]</scope>
</reference>
<reference key="4">
    <citation type="journal article" date="2012" name="Nat. Commun.">
        <title>Quantitative maps of protein phosphorylation sites across 14 different rat organs and tissues.</title>
        <authorList>
            <person name="Lundby A."/>
            <person name="Secher A."/>
            <person name="Lage K."/>
            <person name="Nordsborg N.B."/>
            <person name="Dmytriyev A."/>
            <person name="Lundby C."/>
            <person name="Olsen J.V."/>
        </authorList>
    </citation>
    <scope>PHOSPHORYLATION [LARGE SCALE ANALYSIS] AT SER-176</scope>
    <scope>IDENTIFICATION BY MASS SPECTROMETRY [LARGE SCALE ANALYSIS]</scope>
</reference>
<keyword id="KW-0025">Alternative splicing</keyword>
<keyword id="KW-0217">Developmental protein</keyword>
<keyword id="KW-0238">DNA-binding</keyword>
<keyword id="KW-0479">Metal-binding</keyword>
<keyword id="KW-0524">Neurogenesis</keyword>
<keyword id="KW-0539">Nucleus</keyword>
<keyword id="KW-0597">Phosphoprotein</keyword>
<keyword id="KW-1185">Reference proteome</keyword>
<keyword id="KW-0964">Secreted</keyword>
<keyword id="KW-0804">Transcription</keyword>
<keyword id="KW-0805">Transcription regulation</keyword>
<keyword id="KW-0862">Zinc</keyword>
<keyword id="KW-0863">Zinc-finger</keyword>
<gene>
    <name type="primary">Deaf1</name>
    <name type="synonym">Spn</name>
</gene>
<organism>
    <name type="scientific">Rattus norvegicus</name>
    <name type="common">Rat</name>
    <dbReference type="NCBI Taxonomy" id="10116"/>
    <lineage>
        <taxon>Eukaryota</taxon>
        <taxon>Metazoa</taxon>
        <taxon>Chordata</taxon>
        <taxon>Craniata</taxon>
        <taxon>Vertebrata</taxon>
        <taxon>Euteleostomi</taxon>
        <taxon>Mammalia</taxon>
        <taxon>Eutheria</taxon>
        <taxon>Euarchontoglires</taxon>
        <taxon>Glires</taxon>
        <taxon>Rodentia</taxon>
        <taxon>Myomorpha</taxon>
        <taxon>Muroidea</taxon>
        <taxon>Muridae</taxon>
        <taxon>Murinae</taxon>
        <taxon>Rattus</taxon>
    </lineage>
</organism>
<evidence type="ECO:0000250" key="1"/>
<evidence type="ECO:0000250" key="2">
    <source>
        <dbReference type="UniProtKB" id="O75398"/>
    </source>
</evidence>
<evidence type="ECO:0000250" key="3">
    <source>
        <dbReference type="UniProtKB" id="Q9Z1T5"/>
    </source>
</evidence>
<evidence type="ECO:0000255" key="4"/>
<evidence type="ECO:0000255" key="5">
    <source>
        <dbReference type="PROSITE-ProRule" id="PRU00134"/>
    </source>
</evidence>
<evidence type="ECO:0000255" key="6">
    <source>
        <dbReference type="PROSITE-ProRule" id="PRU00185"/>
    </source>
</evidence>
<evidence type="ECO:0000256" key="7">
    <source>
        <dbReference type="SAM" id="MobiDB-lite"/>
    </source>
</evidence>
<evidence type="ECO:0000303" key="8">
    <source>
    </source>
</evidence>
<evidence type="ECO:0000305" key="9"/>
<evidence type="ECO:0007744" key="10">
    <source>
    </source>
</evidence>
<evidence type="ECO:0007744" key="11">
    <source>
    </source>
</evidence>
<comment type="function">
    <text evidence="2 3">Transcription factor that binds to sequence with multiple copies of 5'-TTC[CG]G-3' present in its own promoter and that of the HNRPA2B1 gene. Down-regulates transcription of these genes. Binds to the retinoic acid response element (RARE) 5'-AGGGTTCACCGAAAGTTCA-3'. Activates the proenkephalin gene independently of promoter binding, probably through protein-protein interaction. When secreted, behaves as an inhibitor of cell proliferation, by arresting cells in the G0 or G1 phase. Regulates epithelial cell proliferation and side-branching in the mammary gland. Required for neural tube closure and skeletal patterning. Controls the expression of peripheral tissue antigens in pancreatic lymph nodes. Transcriptional activator of EIF4G3. May also involved in behavior (By similarity).</text>
</comment>
<comment type="subunit">
    <text evidence="1">Homodimer (By similarity). Interacts with LMO4; LMO4 blocks export from nucleus. Interacts with LMO2 and CLIM2. May interact with the corepressors NCOR1 and NCRO2. Identified in a complex with XRCC5 and XRCC6. Interacts (via the SAND domain) with the DNA-PK complex subunit XRCC6; the interaction is direct and may be inhibited by DNA-binding (By similarity).</text>
</comment>
<comment type="subcellular location">
    <subcellularLocation>
        <location>Nucleus</location>
    </subcellularLocation>
    <subcellularLocation>
        <location>Secreted</location>
    </subcellularLocation>
    <text>Secreted in some cell types.</text>
</comment>
<comment type="alternative products">
    <event type="alternative splicing"/>
    <isoform>
        <id>O88450-1</id>
        <name>1</name>
        <sequence type="displayed"/>
    </isoform>
    <isoform>
        <id>O88450-2</id>
        <name>2</name>
        <sequence type="described" ref="VSP_005969"/>
    </isoform>
</comment>
<comment type="tissue specificity">
    <text>Ubiquitous. Detected in brain, spleen, adrenal, lung, skeletal muscle, liver, kidney, and in developing germ cells in testis. In pituitary, restricted to hormone-secreting cell types.</text>
</comment>
<comment type="PTM">
    <text evidence="1">May be phosphorylated by DNA-PK complex in a DNA independent manner (in vitro).</text>
</comment>
<feature type="chain" id="PRO_0000074087" description="Deformed epidermal autoregulatory factor 1 homolog">
    <location>
        <begin position="1"/>
        <end position="565"/>
    </location>
</feature>
<feature type="domain" description="SAND" evidence="6">
    <location>
        <begin position="193"/>
        <end position="273"/>
    </location>
</feature>
<feature type="zinc finger region" description="MYND-type" evidence="5">
    <location>
        <begin position="504"/>
        <end position="540"/>
    </location>
</feature>
<feature type="region of interest" description="Disordered" evidence="7">
    <location>
        <begin position="29"/>
        <end position="62"/>
    </location>
</feature>
<feature type="region of interest" description="Disordered" evidence="7">
    <location>
        <begin position="162"/>
        <end position="189"/>
    </location>
</feature>
<feature type="region of interest" description="Interaction with LMO4" evidence="1">
    <location>
        <begin position="403"/>
        <end position="478"/>
    </location>
</feature>
<feature type="short sequence motif" description="Nuclear localization signal" evidence="4">
    <location>
        <begin position="301"/>
        <end position="316"/>
    </location>
</feature>
<feature type="compositionally biased region" description="Pro residues" evidence="7">
    <location>
        <begin position="169"/>
        <end position="181"/>
    </location>
</feature>
<feature type="binding site" evidence="5">
    <location>
        <position position="504"/>
    </location>
    <ligand>
        <name>Zn(2+)</name>
        <dbReference type="ChEBI" id="CHEBI:29105"/>
        <label>1</label>
    </ligand>
</feature>
<feature type="binding site" evidence="5">
    <location>
        <position position="507"/>
    </location>
    <ligand>
        <name>Zn(2+)</name>
        <dbReference type="ChEBI" id="CHEBI:29105"/>
        <label>1</label>
    </ligand>
</feature>
<feature type="binding site" evidence="5">
    <location>
        <position position="515"/>
    </location>
    <ligand>
        <name>Zn(2+)</name>
        <dbReference type="ChEBI" id="CHEBI:29105"/>
        <label>2</label>
    </ligand>
</feature>
<feature type="binding site" evidence="5">
    <location>
        <position position="518"/>
    </location>
    <ligand>
        <name>Zn(2+)</name>
        <dbReference type="ChEBI" id="CHEBI:29105"/>
        <label>2</label>
    </ligand>
</feature>
<feature type="binding site" evidence="5">
    <location>
        <position position="524"/>
    </location>
    <ligand>
        <name>Zn(2+)</name>
        <dbReference type="ChEBI" id="CHEBI:29105"/>
        <label>1</label>
    </ligand>
</feature>
<feature type="binding site" evidence="5">
    <location>
        <position position="528"/>
    </location>
    <ligand>
        <name>Zn(2+)</name>
        <dbReference type="ChEBI" id="CHEBI:29105"/>
        <label>1</label>
    </ligand>
</feature>
<feature type="binding site" evidence="5">
    <location>
        <position position="536"/>
    </location>
    <ligand>
        <name>Zn(2+)</name>
        <dbReference type="ChEBI" id="CHEBI:29105"/>
        <label>2</label>
    </ligand>
</feature>
<feature type="binding site" evidence="5">
    <location>
        <position position="540"/>
    </location>
    <ligand>
        <name>Zn(2+)</name>
        <dbReference type="ChEBI" id="CHEBI:29105"/>
        <label>2</label>
    </ligand>
</feature>
<feature type="modified residue" description="Phosphothreonine" evidence="3">
    <location>
        <position position="171"/>
    </location>
</feature>
<feature type="modified residue" description="Phosphoserine" evidence="11">
    <location>
        <position position="176"/>
    </location>
</feature>
<feature type="modified residue" description="Phosphothreonine" evidence="3">
    <location>
        <position position="179"/>
    </location>
</feature>
<feature type="modified residue" description="Phosphothreonine" evidence="2">
    <location>
        <position position="432"/>
    </location>
</feature>
<feature type="modified residue" description="Phosphoserine" evidence="10">
    <location>
        <position position="443"/>
    </location>
</feature>
<feature type="modified residue" description="Phosphoserine" evidence="10">
    <location>
        <position position="448"/>
    </location>
</feature>
<feature type="splice variant" id="VSP_005969" description="In isoform 2." evidence="8">
    <location>
        <begin position="1"/>
        <end position="68"/>
    </location>
</feature>
<feature type="sequence conflict" description="In Ref. 2; AAC35994." evidence="9" ref="2">
    <original>V</original>
    <variation>D</variation>
    <location>
        <position position="151"/>
    </location>
</feature>
<feature type="sequence conflict" description="In Ref. 2; AAC35994." evidence="9" ref="2">
    <original>A</original>
    <variation>T</variation>
    <location>
        <position position="182"/>
    </location>
</feature>
<feature type="sequence conflict" description="In Ref. 2; AAC35994." evidence="9" ref="2">
    <original>FV</original>
    <variation>LL</variation>
    <location>
        <begin position="297"/>
        <end position="298"/>
    </location>
</feature>
<feature type="sequence conflict" description="In Ref. 2; AAC35994." evidence="9" ref="2">
    <original>ELPTTP</original>
    <variation>VSCPRL</variation>
    <location>
        <begin position="308"/>
        <end position="313"/>
    </location>
</feature>
<feature type="sequence conflict" description="In Ref. 2; AAC35994." evidence="9" ref="2">
    <original>SGQITTSGALTF</original>
    <variation>FRTDHYLWSTNL</variation>
    <location>
        <begin position="338"/>
        <end position="349"/>
    </location>
</feature>
<feature type="sequence conflict" description="In Ref. 2; AAC35994." evidence="9" ref="2">
    <original>PCR</original>
    <variation>LQ</variation>
    <location>
        <begin position="384"/>
        <end position="386"/>
    </location>
</feature>
<feature type="sequence conflict" description="In Ref. 2; AAC35994." evidence="9" ref="2">
    <original>V</original>
    <variation>A</variation>
    <location>
        <position position="428"/>
    </location>
</feature>
<feature type="sequence conflict" description="In Ref. 2; AAC35994." evidence="9" ref="2">
    <original>G</original>
    <variation>R</variation>
    <location>
        <position position="508"/>
    </location>
</feature>
<feature type="sequence conflict" description="In Ref. 2; AAC35994." evidence="9" ref="2">
    <original>D</original>
    <variation>V</variation>
    <location>
        <position position="532"/>
    </location>
</feature>
<sequence>MEDSDSAAKQLGLAEAAAVAAAAAVAAAAAAAAESEAEEPVLSRDEDSEEDADSEAERETRRVTAVAVMAAESGHMDMGTEALPSPDEAAAAAAFAEVTTVTVANVGSSADNVFTTSVANAASISGHVLSGRTALQIGDSLNTEKATLIVVHTDGSIVETTGLKGPAAPLTPGPQSPPTPLAPGQEKGGTKYNWDPSVYDSELPVRCRNISGTLYKSRLGSGGRGRCIKQGENWYSPTEFEAMAGRASSKDWKRSIRYAGRPLQCLIQDGILNPHAASCTCAACCDDMTLSGPVRLFVPYKRRKKENELPTTPVKKDSPKNITLLPATAATTFTVTPSGQITTSGALTFDRASTVEATAVISESPAQGDVFAGATVQEAGVQPPCRVGHPEPHYPGYQDSCQIAPFPEAALPTSHPKIVLTSLPALAVPPSTPTKAVSPTVVSGLEMSEHRSWLYLEEMVNSLLNTAQQLKTLFEQAKQASSCREAAVTQARMQVDAERKEQSCVNCGREAMSECTGCHKVNYCSTFCQRKDWKDHQHVCGQSASVTVQADDVHVEESVIEKVAV</sequence>
<dbReference type="EMBL" id="AF055884">
    <property type="protein sequence ID" value="AAC79679.1"/>
    <property type="molecule type" value="mRNA"/>
</dbReference>
<dbReference type="EMBL" id="U59659">
    <property type="protein sequence ID" value="AAC35994.1"/>
    <property type="molecule type" value="mRNA"/>
</dbReference>
<dbReference type="BMRB" id="O88450"/>
<dbReference type="SMR" id="O88450"/>
<dbReference type="FunCoup" id="O88450">
    <property type="interactions" value="1850"/>
</dbReference>
<dbReference type="IntAct" id="O88450">
    <property type="interactions" value="1"/>
</dbReference>
<dbReference type="STRING" id="10116.ENSRNOP00000046656"/>
<dbReference type="GlyGen" id="O88450">
    <property type="glycosylation" value="1 site"/>
</dbReference>
<dbReference type="iPTMnet" id="O88450"/>
<dbReference type="PhosphoSitePlus" id="O88450"/>
<dbReference type="PaxDb" id="10116-ENSRNOP00000046656"/>
<dbReference type="UCSC" id="RGD:620671">
    <molecule id="O88450-1"/>
    <property type="organism name" value="rat"/>
</dbReference>
<dbReference type="AGR" id="RGD:620671"/>
<dbReference type="RGD" id="620671">
    <property type="gene designation" value="Deaf1"/>
</dbReference>
<dbReference type="eggNOG" id="KOG4333">
    <property type="taxonomic scope" value="Eukaryota"/>
</dbReference>
<dbReference type="InParanoid" id="O88450"/>
<dbReference type="OrthoDB" id="437457at2759"/>
<dbReference type="PhylomeDB" id="O88450"/>
<dbReference type="PRO" id="PR:O88450"/>
<dbReference type="Proteomes" id="UP000002494">
    <property type="component" value="Unplaced"/>
</dbReference>
<dbReference type="GO" id="GO:0005737">
    <property type="term" value="C:cytoplasm"/>
    <property type="evidence" value="ECO:0000266"/>
    <property type="project" value="RGD"/>
</dbReference>
<dbReference type="GO" id="GO:0005576">
    <property type="term" value="C:extracellular region"/>
    <property type="evidence" value="ECO:0007669"/>
    <property type="project" value="UniProtKB-SubCell"/>
</dbReference>
<dbReference type="GO" id="GO:0005634">
    <property type="term" value="C:nucleus"/>
    <property type="evidence" value="ECO:0000266"/>
    <property type="project" value="RGD"/>
</dbReference>
<dbReference type="GO" id="GO:0090575">
    <property type="term" value="C:RNA polymerase II transcription regulator complex"/>
    <property type="evidence" value="ECO:0000266"/>
    <property type="project" value="RGD"/>
</dbReference>
<dbReference type="GO" id="GO:0000981">
    <property type="term" value="F:DNA-binding transcription factor activity, RNA polymerase II-specific"/>
    <property type="evidence" value="ECO:0000318"/>
    <property type="project" value="GO_Central"/>
</dbReference>
<dbReference type="GO" id="GO:0001227">
    <property type="term" value="F:DNA-binding transcription repressor activity, RNA polymerase II-specific"/>
    <property type="evidence" value="ECO:0000266"/>
    <property type="project" value="RGD"/>
</dbReference>
<dbReference type="GO" id="GO:0000977">
    <property type="term" value="F:RNA polymerase II transcription regulatory region sequence-specific DNA binding"/>
    <property type="evidence" value="ECO:0000266"/>
    <property type="project" value="RGD"/>
</dbReference>
<dbReference type="GO" id="GO:0008270">
    <property type="term" value="F:zinc ion binding"/>
    <property type="evidence" value="ECO:0007669"/>
    <property type="project" value="UniProtKB-KW"/>
</dbReference>
<dbReference type="GO" id="GO:0001662">
    <property type="term" value="P:behavioral fear response"/>
    <property type="evidence" value="ECO:0000266"/>
    <property type="project" value="RGD"/>
</dbReference>
<dbReference type="GO" id="GO:0048706">
    <property type="term" value="P:embryonic skeletal system development"/>
    <property type="evidence" value="ECO:0000250"/>
    <property type="project" value="UniProtKB"/>
</dbReference>
<dbReference type="GO" id="GO:0045892">
    <property type="term" value="P:negative regulation of DNA-templated transcription"/>
    <property type="evidence" value="ECO:0000266"/>
    <property type="project" value="RGD"/>
</dbReference>
<dbReference type="GO" id="GO:0000122">
    <property type="term" value="P:negative regulation of transcription by RNA polymerase II"/>
    <property type="evidence" value="ECO:0000266"/>
    <property type="project" value="RGD"/>
</dbReference>
<dbReference type="GO" id="GO:0001843">
    <property type="term" value="P:neural tube closure"/>
    <property type="evidence" value="ECO:0000250"/>
    <property type="project" value="UniProtKB"/>
</dbReference>
<dbReference type="GO" id="GO:0045893">
    <property type="term" value="P:positive regulation of DNA-templated transcription"/>
    <property type="evidence" value="ECO:0000266"/>
    <property type="project" value="RGD"/>
</dbReference>
<dbReference type="GO" id="GO:0045944">
    <property type="term" value="P:positive regulation of transcription by RNA polymerase II"/>
    <property type="evidence" value="ECO:0000314"/>
    <property type="project" value="RGD"/>
</dbReference>
<dbReference type="GO" id="GO:0033599">
    <property type="term" value="P:regulation of mammary gland epithelial cell proliferation"/>
    <property type="evidence" value="ECO:0000250"/>
    <property type="project" value="UniProtKB"/>
</dbReference>
<dbReference type="GO" id="GO:0006357">
    <property type="term" value="P:regulation of transcription by RNA polymerase II"/>
    <property type="evidence" value="ECO:0000266"/>
    <property type="project" value="RGD"/>
</dbReference>
<dbReference type="GO" id="GO:0008542">
    <property type="term" value="P:visual learning"/>
    <property type="evidence" value="ECO:0000266"/>
    <property type="project" value="RGD"/>
</dbReference>
<dbReference type="FunFam" id="3.10.390.10:FF:000004">
    <property type="entry name" value="Deformed epidermal autoregulatory factor 1"/>
    <property type="match status" value="1"/>
</dbReference>
<dbReference type="FunFam" id="6.10.140.2220:FF:000008">
    <property type="entry name" value="Deformed epidermal autoregulatory factor 1"/>
    <property type="match status" value="1"/>
</dbReference>
<dbReference type="Gene3D" id="6.10.140.2220">
    <property type="match status" value="1"/>
</dbReference>
<dbReference type="Gene3D" id="3.10.390.10">
    <property type="entry name" value="SAND domain-like"/>
    <property type="match status" value="1"/>
</dbReference>
<dbReference type="InterPro" id="IPR010919">
    <property type="entry name" value="SAND-like_dom_sf"/>
</dbReference>
<dbReference type="InterPro" id="IPR000770">
    <property type="entry name" value="SAND_dom"/>
</dbReference>
<dbReference type="InterPro" id="IPR024119">
    <property type="entry name" value="TF_DEAF-1"/>
</dbReference>
<dbReference type="InterPro" id="IPR002893">
    <property type="entry name" value="Znf_MYND"/>
</dbReference>
<dbReference type="PANTHER" id="PTHR10237:SF1">
    <property type="entry name" value="DEFORMED EPIDERMAL AUTOREGULATORY FACTOR 1 HOMOLOG"/>
    <property type="match status" value="1"/>
</dbReference>
<dbReference type="PANTHER" id="PTHR10237">
    <property type="entry name" value="DEFORMED EPIDERMAL AUTOREGULATORY FACTOR 1 HOMOLOG SUPPRESSIN"/>
    <property type="match status" value="1"/>
</dbReference>
<dbReference type="Pfam" id="PF01342">
    <property type="entry name" value="SAND"/>
    <property type="match status" value="1"/>
</dbReference>
<dbReference type="Pfam" id="PF01753">
    <property type="entry name" value="zf-MYND"/>
    <property type="match status" value="1"/>
</dbReference>
<dbReference type="SMART" id="SM00258">
    <property type="entry name" value="SAND"/>
    <property type="match status" value="1"/>
</dbReference>
<dbReference type="SUPFAM" id="SSF144232">
    <property type="entry name" value="HIT/MYND zinc finger-like"/>
    <property type="match status" value="1"/>
</dbReference>
<dbReference type="SUPFAM" id="SSF63763">
    <property type="entry name" value="SAND domain-like"/>
    <property type="match status" value="1"/>
</dbReference>
<dbReference type="PROSITE" id="PS50864">
    <property type="entry name" value="SAND"/>
    <property type="match status" value="1"/>
</dbReference>
<dbReference type="PROSITE" id="PS01360">
    <property type="entry name" value="ZF_MYND_1"/>
    <property type="match status" value="1"/>
</dbReference>
<dbReference type="PROSITE" id="PS50865">
    <property type="entry name" value="ZF_MYND_2"/>
    <property type="match status" value="1"/>
</dbReference>